<feature type="chain" id="PRO_0000079956" description="Replicative helicase loader DnaC">
    <location>
        <begin position="1"/>
        <end position="245"/>
    </location>
</feature>
<feature type="site" description="Probably involved in the interaction with the DnaB protein" evidence="1">
    <location>
        <position position="69"/>
    </location>
</feature>
<keyword id="KW-0067">ATP-binding</keyword>
<keyword id="KW-0235">DNA replication</keyword>
<keyword id="KW-0238">DNA-binding</keyword>
<keyword id="KW-0378">Hydrolase</keyword>
<keyword id="KW-0547">Nucleotide-binding</keyword>
<keyword id="KW-0639">Primosome</keyword>
<keyword id="KW-1185">Reference proteome</keyword>
<protein>
    <recommendedName>
        <fullName>Replicative helicase loader DnaC</fullName>
        <ecNumber evidence="1">3.6.4.-</ecNumber>
    </recommendedName>
    <alternativeName>
        <fullName>DNA replication protein DnaC</fullName>
    </alternativeName>
</protein>
<accession>P0AEF1</accession>
<accession>P07905</accession>
<evidence type="ECO:0000250" key="1">
    <source>
        <dbReference type="UniProtKB" id="P0AEF0"/>
    </source>
</evidence>
<evidence type="ECO:0000305" key="2"/>
<comment type="function">
    <text evidence="1">Required to load the replicative helix DnaB onto single-stranded (ss)DNA, to initiate chromosomal replication. DnaC alters the inter-domain and inter-subunit interactions of DnaB, inducing an open ring conformation that allows ssDNA to access the interior of the DnaB(6):DnaC(6) ring. Has ATPase activity only in the presence of DnaB and ssDNA. ssDNA binds to the central pore in the DnaB(6):DnaC(6) complex, making contacts with both subunits. It forms, in concert with DnaB protein and other prepriming proteins DnaT, N, N', N'' a prepriming protein complex on the specific site of the template DNA recognized by protein N' (By similarity).</text>
</comment>
<comment type="catalytic activity">
    <reaction evidence="1">
        <text>ATP + H2O = ADP + phosphate + H(+)</text>
        <dbReference type="Rhea" id="RHEA:13065"/>
        <dbReference type="ChEBI" id="CHEBI:15377"/>
        <dbReference type="ChEBI" id="CHEBI:15378"/>
        <dbReference type="ChEBI" id="CHEBI:30616"/>
        <dbReference type="ChEBI" id="CHEBI:43474"/>
        <dbReference type="ChEBI" id="CHEBI:456216"/>
    </reaction>
    <physiologicalReaction direction="left-to-right" evidence="1">
        <dbReference type="Rhea" id="RHEA:13066"/>
    </physiologicalReaction>
</comment>
<comment type="subunit">
    <text evidence="1">The helix loader is a DnaB(6):DnaC(6) complex with a crack opening large enough to allow ssDNA into the central cavity.</text>
</comment>
<comment type="similarity">
    <text evidence="2">Belongs to the DnaC family.</text>
</comment>
<dbReference type="EC" id="3.6.4.-" evidence="1"/>
<dbReference type="EMBL" id="AE014075">
    <property type="protein sequence ID" value="AAN83860.1"/>
    <property type="molecule type" value="Genomic_DNA"/>
</dbReference>
<dbReference type="RefSeq" id="WP_000799911.1">
    <property type="nucleotide sequence ID" value="NZ_CP051263.1"/>
</dbReference>
<dbReference type="SMR" id="P0AEF1"/>
<dbReference type="STRING" id="199310.c5440"/>
<dbReference type="GeneID" id="93777487"/>
<dbReference type="KEGG" id="ecc:c5440"/>
<dbReference type="eggNOG" id="COG1484">
    <property type="taxonomic scope" value="Bacteria"/>
</dbReference>
<dbReference type="HOGENOM" id="CLU_062999_3_1_6"/>
<dbReference type="BioCyc" id="ECOL199310:C5440-MONOMER"/>
<dbReference type="Proteomes" id="UP000001410">
    <property type="component" value="Chromosome"/>
</dbReference>
<dbReference type="GO" id="GO:1990077">
    <property type="term" value="C:primosome complex"/>
    <property type="evidence" value="ECO:0007669"/>
    <property type="project" value="UniProtKB-KW"/>
</dbReference>
<dbReference type="GO" id="GO:0005524">
    <property type="term" value="F:ATP binding"/>
    <property type="evidence" value="ECO:0007669"/>
    <property type="project" value="UniProtKB-KW"/>
</dbReference>
<dbReference type="GO" id="GO:0016887">
    <property type="term" value="F:ATP hydrolysis activity"/>
    <property type="evidence" value="ECO:0007669"/>
    <property type="project" value="InterPro"/>
</dbReference>
<dbReference type="GO" id="GO:0003677">
    <property type="term" value="F:DNA binding"/>
    <property type="evidence" value="ECO:0007669"/>
    <property type="project" value="UniProtKB-KW"/>
</dbReference>
<dbReference type="GO" id="GO:0006269">
    <property type="term" value="P:DNA replication, synthesis of primer"/>
    <property type="evidence" value="ECO:0007669"/>
    <property type="project" value="UniProtKB-KW"/>
</dbReference>
<dbReference type="CDD" id="cd00009">
    <property type="entry name" value="AAA"/>
    <property type="match status" value="1"/>
</dbReference>
<dbReference type="FunFam" id="3.40.50.300:FF:000266">
    <property type="entry name" value="DNA replication protein DnaC"/>
    <property type="match status" value="1"/>
</dbReference>
<dbReference type="Gene3D" id="3.40.50.300">
    <property type="entry name" value="P-loop containing nucleotide triphosphate hydrolases"/>
    <property type="match status" value="1"/>
</dbReference>
<dbReference type="InterPro" id="IPR003593">
    <property type="entry name" value="AAA+_ATPase"/>
</dbReference>
<dbReference type="InterPro" id="IPR028350">
    <property type="entry name" value="DNAC/IstB-like"/>
</dbReference>
<dbReference type="InterPro" id="IPR002611">
    <property type="entry name" value="IstB_ATP-bd"/>
</dbReference>
<dbReference type="InterPro" id="IPR027417">
    <property type="entry name" value="P-loop_NTPase"/>
</dbReference>
<dbReference type="NCBIfam" id="NF005931">
    <property type="entry name" value="PRK07952.1"/>
    <property type="match status" value="1"/>
</dbReference>
<dbReference type="PANTHER" id="PTHR30050">
    <property type="entry name" value="CHROMOSOMAL REPLICATION INITIATOR PROTEIN DNAA"/>
    <property type="match status" value="1"/>
</dbReference>
<dbReference type="PANTHER" id="PTHR30050:SF9">
    <property type="entry name" value="DNA REPLICATION PROTEIN DNAC"/>
    <property type="match status" value="1"/>
</dbReference>
<dbReference type="Pfam" id="PF01695">
    <property type="entry name" value="IstB_IS21"/>
    <property type="match status" value="1"/>
</dbReference>
<dbReference type="PIRSF" id="PIRSF003073">
    <property type="entry name" value="DNAC_TnpB_IstB"/>
    <property type="match status" value="1"/>
</dbReference>
<dbReference type="SMART" id="SM00382">
    <property type="entry name" value="AAA"/>
    <property type="match status" value="1"/>
</dbReference>
<dbReference type="SUPFAM" id="SSF52540">
    <property type="entry name" value="P-loop containing nucleoside triphosphate hydrolases"/>
    <property type="match status" value="1"/>
</dbReference>
<reference key="1">
    <citation type="journal article" date="2002" name="Proc. Natl. Acad. Sci. U.S.A.">
        <title>Extensive mosaic structure revealed by the complete genome sequence of uropathogenic Escherichia coli.</title>
        <authorList>
            <person name="Welch R.A."/>
            <person name="Burland V."/>
            <person name="Plunkett G. III"/>
            <person name="Redford P."/>
            <person name="Roesch P."/>
            <person name="Rasko D."/>
            <person name="Buckles E.L."/>
            <person name="Liou S.-R."/>
            <person name="Boutin A."/>
            <person name="Hackett J."/>
            <person name="Stroud D."/>
            <person name="Mayhew G.F."/>
            <person name="Rose D.J."/>
            <person name="Zhou S."/>
            <person name="Schwartz D.C."/>
            <person name="Perna N.T."/>
            <person name="Mobley H.L.T."/>
            <person name="Donnenberg M.S."/>
            <person name="Blattner F.R."/>
        </authorList>
    </citation>
    <scope>NUCLEOTIDE SEQUENCE [LARGE SCALE GENOMIC DNA]</scope>
    <source>
        <strain>CFT073 / ATCC 700928 / UPEC</strain>
    </source>
</reference>
<organism>
    <name type="scientific">Escherichia coli O6:H1 (strain CFT073 / ATCC 700928 / UPEC)</name>
    <dbReference type="NCBI Taxonomy" id="199310"/>
    <lineage>
        <taxon>Bacteria</taxon>
        <taxon>Pseudomonadati</taxon>
        <taxon>Pseudomonadota</taxon>
        <taxon>Gammaproteobacteria</taxon>
        <taxon>Enterobacterales</taxon>
        <taxon>Enterobacteriaceae</taxon>
        <taxon>Escherichia</taxon>
    </lineage>
</organism>
<gene>
    <name type="primary">dnaC</name>
    <name type="ordered locus">c5440</name>
</gene>
<proteinExistence type="inferred from homology"/>
<name>DNAC_ECOL6</name>
<sequence length="245" mass="27935">MKNVGDLMQRLQKMMPAHIKPAFKTGEELLAWQKEQGAIRSAALERENRAMKMQRTFNRSGIRPLHQNCSFENYRVECEGQMNALSKARQYVEEFDGNIASFIFSGKPGTGKNHLAAAICNELLLRGKSVLIITVADIMSAMKDTFRNSGTSEEQLLNDLSNVDLLVIDEIGVQTESKYEKVIINQIVDRRSSSKRPTGMLTNSNMEEMTKLLGERVMDRMRLGNSLWVIFNWDSYRSRVTGKEY</sequence>